<organism>
    <name type="scientific">Dechloromonas aromatica (strain RCB)</name>
    <dbReference type="NCBI Taxonomy" id="159087"/>
    <lineage>
        <taxon>Bacteria</taxon>
        <taxon>Pseudomonadati</taxon>
        <taxon>Pseudomonadota</taxon>
        <taxon>Betaproteobacteria</taxon>
        <taxon>Rhodocyclales</taxon>
        <taxon>Azonexaceae</taxon>
        <taxon>Dechloromonas</taxon>
    </lineage>
</organism>
<accession>Q47II9</accession>
<feature type="chain" id="PRO_0000261864" description="Glucose-1-phosphate adenylyltransferase">
    <location>
        <begin position="1"/>
        <end position="440"/>
    </location>
</feature>
<feature type="binding site" evidence="1">
    <location>
        <position position="125"/>
    </location>
    <ligand>
        <name>alpha-D-glucose 1-phosphate</name>
        <dbReference type="ChEBI" id="CHEBI:58601"/>
    </ligand>
</feature>
<feature type="binding site" evidence="1">
    <location>
        <position position="190"/>
    </location>
    <ligand>
        <name>alpha-D-glucose 1-phosphate</name>
        <dbReference type="ChEBI" id="CHEBI:58601"/>
    </ligand>
</feature>
<feature type="binding site" evidence="1">
    <location>
        <begin position="205"/>
        <end position="206"/>
    </location>
    <ligand>
        <name>alpha-D-glucose 1-phosphate</name>
        <dbReference type="ChEBI" id="CHEBI:58601"/>
    </ligand>
</feature>
<feature type="binding site" evidence="1">
    <location>
        <position position="223"/>
    </location>
    <ligand>
        <name>alpha-D-glucose 1-phosphate</name>
        <dbReference type="ChEBI" id="CHEBI:58601"/>
    </ligand>
</feature>
<evidence type="ECO:0000255" key="1">
    <source>
        <dbReference type="HAMAP-Rule" id="MF_00624"/>
    </source>
</evidence>
<sequence length="440" mass="50131">MPMSTSCPHQPYCEMREQTDMRFISHLTRNTFAIILAGGRGTRLKQLTDFRSKPAVPFAGKFRILDFTLSNCVNSGIRKIGVATQYKAHSLIRHIQRGWSFLDGRFDEFIQLLPAQQQIDETQWYQGTADAVYQNLHFLRRYQPDHILVVAGDHIYKMDYGRMLAHHVKHHADMTVACIDVPLDEAREFGVMGVDEQDRVIDFVEKPQNPPAIPGQPDRALASMGIYIFNTKFLFEQLERDAMTKGSNRDFGKDIIPYIVPRYRVFAHRFADSCVGSDNHRPYWRDVGTIDAYWEANMEMTKVTPELNVYDRDWPIWTYQEQIPPAKFVFDDEDRRGTAVDSLIAGGCIISGASVKRSLLFSSVNVHSWASVEDSVVLPDVDIGRHAVLKRCVIDKHCRIPEGMVIGVDPEEDRKRFHVSPKGITLVTAEMLGQGAAEGR</sequence>
<keyword id="KW-0067">ATP-binding</keyword>
<keyword id="KW-0119">Carbohydrate metabolism</keyword>
<keyword id="KW-0320">Glycogen biosynthesis</keyword>
<keyword id="KW-0321">Glycogen metabolism</keyword>
<keyword id="KW-0547">Nucleotide-binding</keyword>
<keyword id="KW-0548">Nucleotidyltransferase</keyword>
<keyword id="KW-0808">Transferase</keyword>
<proteinExistence type="inferred from homology"/>
<reference key="1">
    <citation type="journal article" date="2009" name="BMC Genomics">
        <title>Metabolic analysis of the soil microbe Dechloromonas aromatica str. RCB: indications of a surprisingly complex life-style and cryptic anaerobic pathways for aromatic degradation.</title>
        <authorList>
            <person name="Salinero K.K."/>
            <person name="Keller K."/>
            <person name="Feil W.S."/>
            <person name="Feil H."/>
            <person name="Trong S."/>
            <person name="Di Bartolo G."/>
            <person name="Lapidus A."/>
        </authorList>
    </citation>
    <scope>NUCLEOTIDE SEQUENCE [LARGE SCALE GENOMIC DNA]</scope>
    <source>
        <strain>RCB</strain>
    </source>
</reference>
<name>GLGC_DECAR</name>
<comment type="function">
    <text evidence="1">Involved in the biosynthesis of ADP-glucose, a building block required for the elongation reactions to produce glycogen. Catalyzes the reaction between ATP and alpha-D-glucose 1-phosphate (G1P) to produce pyrophosphate and ADP-Glc.</text>
</comment>
<comment type="catalytic activity">
    <reaction evidence="1">
        <text>alpha-D-glucose 1-phosphate + ATP + H(+) = ADP-alpha-D-glucose + diphosphate</text>
        <dbReference type="Rhea" id="RHEA:12120"/>
        <dbReference type="ChEBI" id="CHEBI:15378"/>
        <dbReference type="ChEBI" id="CHEBI:30616"/>
        <dbReference type="ChEBI" id="CHEBI:33019"/>
        <dbReference type="ChEBI" id="CHEBI:57498"/>
        <dbReference type="ChEBI" id="CHEBI:58601"/>
        <dbReference type="EC" id="2.7.7.27"/>
    </reaction>
</comment>
<comment type="pathway">
    <text evidence="1">Glycan biosynthesis; glycogen biosynthesis.</text>
</comment>
<comment type="subunit">
    <text evidence="1">Homotetramer.</text>
</comment>
<comment type="similarity">
    <text evidence="1">Belongs to the bacterial/plant glucose-1-phosphate adenylyltransferase family.</text>
</comment>
<protein>
    <recommendedName>
        <fullName evidence="1">Glucose-1-phosphate adenylyltransferase</fullName>
        <ecNumber evidence="1">2.7.7.27</ecNumber>
    </recommendedName>
    <alternativeName>
        <fullName evidence="1">ADP-glucose pyrophosphorylase</fullName>
        <shortName evidence="1">ADPGlc PPase</shortName>
    </alternativeName>
    <alternativeName>
        <fullName evidence="1">ADP-glucose synthase</fullName>
    </alternativeName>
</protein>
<gene>
    <name evidence="1" type="primary">glgC</name>
    <name type="ordered locus">Daro_0585</name>
</gene>
<dbReference type="EC" id="2.7.7.27" evidence="1"/>
<dbReference type="EMBL" id="CP000089">
    <property type="protein sequence ID" value="AAZ45342.1"/>
    <property type="molecule type" value="Genomic_DNA"/>
</dbReference>
<dbReference type="SMR" id="Q47II9"/>
<dbReference type="STRING" id="159087.Daro_0585"/>
<dbReference type="KEGG" id="dar:Daro_0585"/>
<dbReference type="eggNOG" id="COG0448">
    <property type="taxonomic scope" value="Bacteria"/>
</dbReference>
<dbReference type="HOGENOM" id="CLU_029499_14_1_4"/>
<dbReference type="UniPathway" id="UPA00164"/>
<dbReference type="GO" id="GO:0005524">
    <property type="term" value="F:ATP binding"/>
    <property type="evidence" value="ECO:0007669"/>
    <property type="project" value="UniProtKB-KW"/>
</dbReference>
<dbReference type="GO" id="GO:0008878">
    <property type="term" value="F:glucose-1-phosphate adenylyltransferase activity"/>
    <property type="evidence" value="ECO:0007669"/>
    <property type="project" value="UniProtKB-UniRule"/>
</dbReference>
<dbReference type="GO" id="GO:0005978">
    <property type="term" value="P:glycogen biosynthetic process"/>
    <property type="evidence" value="ECO:0007669"/>
    <property type="project" value="UniProtKB-UniRule"/>
</dbReference>
<dbReference type="CDD" id="cd02508">
    <property type="entry name" value="ADP_Glucose_PP"/>
    <property type="match status" value="1"/>
</dbReference>
<dbReference type="CDD" id="cd04651">
    <property type="entry name" value="LbH_G1P_AT_C"/>
    <property type="match status" value="1"/>
</dbReference>
<dbReference type="Gene3D" id="2.160.10.10">
    <property type="entry name" value="Hexapeptide repeat proteins"/>
    <property type="match status" value="1"/>
</dbReference>
<dbReference type="Gene3D" id="3.90.550.10">
    <property type="entry name" value="Spore Coat Polysaccharide Biosynthesis Protein SpsA, Chain A"/>
    <property type="match status" value="1"/>
</dbReference>
<dbReference type="HAMAP" id="MF_00624">
    <property type="entry name" value="GlgC"/>
    <property type="match status" value="1"/>
</dbReference>
<dbReference type="InterPro" id="IPR011831">
    <property type="entry name" value="ADP-Glc_PPase"/>
</dbReference>
<dbReference type="InterPro" id="IPR005836">
    <property type="entry name" value="ADP_Glu_pyroP_CS"/>
</dbReference>
<dbReference type="InterPro" id="IPR023049">
    <property type="entry name" value="GlgC_bac"/>
</dbReference>
<dbReference type="InterPro" id="IPR056818">
    <property type="entry name" value="GlmU/GlgC-like_hexapep"/>
</dbReference>
<dbReference type="InterPro" id="IPR005835">
    <property type="entry name" value="NTP_transferase_dom"/>
</dbReference>
<dbReference type="InterPro" id="IPR029044">
    <property type="entry name" value="Nucleotide-diphossugar_trans"/>
</dbReference>
<dbReference type="InterPro" id="IPR011004">
    <property type="entry name" value="Trimer_LpxA-like_sf"/>
</dbReference>
<dbReference type="NCBIfam" id="TIGR02091">
    <property type="entry name" value="glgC"/>
    <property type="match status" value="1"/>
</dbReference>
<dbReference type="NCBIfam" id="NF001947">
    <property type="entry name" value="PRK00725.1"/>
    <property type="match status" value="1"/>
</dbReference>
<dbReference type="NCBIfam" id="NF002023">
    <property type="entry name" value="PRK00844.1"/>
    <property type="match status" value="1"/>
</dbReference>
<dbReference type="PANTHER" id="PTHR43523:SF2">
    <property type="entry name" value="GLUCOSE-1-PHOSPHATE ADENYLYLTRANSFERASE"/>
    <property type="match status" value="1"/>
</dbReference>
<dbReference type="PANTHER" id="PTHR43523">
    <property type="entry name" value="GLUCOSE-1-PHOSPHATE ADENYLYLTRANSFERASE-RELATED"/>
    <property type="match status" value="1"/>
</dbReference>
<dbReference type="Pfam" id="PF24894">
    <property type="entry name" value="Hexapep_GlmU"/>
    <property type="match status" value="1"/>
</dbReference>
<dbReference type="Pfam" id="PF00483">
    <property type="entry name" value="NTP_transferase"/>
    <property type="match status" value="1"/>
</dbReference>
<dbReference type="SUPFAM" id="SSF53448">
    <property type="entry name" value="Nucleotide-diphospho-sugar transferases"/>
    <property type="match status" value="1"/>
</dbReference>
<dbReference type="SUPFAM" id="SSF51161">
    <property type="entry name" value="Trimeric LpxA-like enzymes"/>
    <property type="match status" value="1"/>
</dbReference>
<dbReference type="PROSITE" id="PS00808">
    <property type="entry name" value="ADP_GLC_PYROPHOSPH_1"/>
    <property type="match status" value="1"/>
</dbReference>
<dbReference type="PROSITE" id="PS00809">
    <property type="entry name" value="ADP_GLC_PYROPHOSPH_2"/>
    <property type="match status" value="1"/>
</dbReference>
<dbReference type="PROSITE" id="PS00810">
    <property type="entry name" value="ADP_GLC_PYROPHOSPH_3"/>
    <property type="match status" value="1"/>
</dbReference>